<accession>Q87BW1</accession>
<organism>
    <name type="scientific">Xylella fastidiosa (strain Temecula1 / ATCC 700964)</name>
    <dbReference type="NCBI Taxonomy" id="183190"/>
    <lineage>
        <taxon>Bacteria</taxon>
        <taxon>Pseudomonadati</taxon>
        <taxon>Pseudomonadota</taxon>
        <taxon>Gammaproteobacteria</taxon>
        <taxon>Lysobacterales</taxon>
        <taxon>Lysobacteraceae</taxon>
        <taxon>Xylella</taxon>
    </lineage>
</organism>
<protein>
    <recommendedName>
        <fullName evidence="1">3-deoxy-manno-octulosonate cytidylyltransferase</fullName>
        <ecNumber evidence="1">2.7.7.38</ecNumber>
    </recommendedName>
    <alternativeName>
        <fullName evidence="1">CMP-2-keto-3-deoxyoctulosonic acid synthase</fullName>
        <shortName evidence="1">CKS</shortName>
        <shortName evidence="1">CMP-KDO synthase</shortName>
    </alternativeName>
</protein>
<reference key="1">
    <citation type="journal article" date="2003" name="J. Bacteriol.">
        <title>Comparative analyses of the complete genome sequences of Pierce's disease and citrus variegated chlorosis strains of Xylella fastidiosa.</title>
        <authorList>
            <person name="Van Sluys M.A."/>
            <person name="de Oliveira M.C."/>
            <person name="Monteiro-Vitorello C.B."/>
            <person name="Miyaki C.Y."/>
            <person name="Furlan L.R."/>
            <person name="Camargo L.E.A."/>
            <person name="da Silva A.C.R."/>
            <person name="Moon D.H."/>
            <person name="Takita M.A."/>
            <person name="Lemos E.G.M."/>
            <person name="Machado M.A."/>
            <person name="Ferro M.I.T."/>
            <person name="da Silva F.R."/>
            <person name="Goldman M.H.S."/>
            <person name="Goldman G.H."/>
            <person name="Lemos M.V.F."/>
            <person name="El-Dorry H."/>
            <person name="Tsai S.M."/>
            <person name="Carrer H."/>
            <person name="Carraro D.M."/>
            <person name="de Oliveira R.C."/>
            <person name="Nunes L.R."/>
            <person name="Siqueira W.J."/>
            <person name="Coutinho L.L."/>
            <person name="Kimura E.T."/>
            <person name="Ferro E.S."/>
            <person name="Harakava R."/>
            <person name="Kuramae E.E."/>
            <person name="Marino C.L."/>
            <person name="Giglioti E."/>
            <person name="Abreu I.L."/>
            <person name="Alves L.M.C."/>
            <person name="do Amaral A.M."/>
            <person name="Baia G.S."/>
            <person name="Blanco S.R."/>
            <person name="Brito M.S."/>
            <person name="Cannavan F.S."/>
            <person name="Celestino A.V."/>
            <person name="da Cunha A.F."/>
            <person name="Fenille R.C."/>
            <person name="Ferro J.A."/>
            <person name="Formighieri E.F."/>
            <person name="Kishi L.T."/>
            <person name="Leoni S.G."/>
            <person name="Oliveira A.R."/>
            <person name="Rosa V.E. Jr."/>
            <person name="Sassaki F.T."/>
            <person name="Sena J.A.D."/>
            <person name="de Souza A.A."/>
            <person name="Truffi D."/>
            <person name="Tsukumo F."/>
            <person name="Yanai G.M."/>
            <person name="Zaros L.G."/>
            <person name="Civerolo E.L."/>
            <person name="Simpson A.J.G."/>
            <person name="Almeida N.F. Jr."/>
            <person name="Setubal J.C."/>
            <person name="Kitajima J.P."/>
        </authorList>
    </citation>
    <scope>NUCLEOTIDE SEQUENCE [LARGE SCALE GENOMIC DNA]</scope>
    <source>
        <strain>Temecula1 / ATCC 700964</strain>
    </source>
</reference>
<dbReference type="EC" id="2.7.7.38" evidence="1"/>
<dbReference type="EMBL" id="AE009442">
    <property type="protein sequence ID" value="AAO29184.1"/>
    <property type="molecule type" value="Genomic_DNA"/>
</dbReference>
<dbReference type="SMR" id="Q87BW1"/>
<dbReference type="KEGG" id="xft:PD_1337"/>
<dbReference type="HOGENOM" id="CLU_065038_1_0_6"/>
<dbReference type="UniPathway" id="UPA00030"/>
<dbReference type="UniPathway" id="UPA00358">
    <property type="reaction ID" value="UER00476"/>
</dbReference>
<dbReference type="Proteomes" id="UP000002516">
    <property type="component" value="Chromosome"/>
</dbReference>
<dbReference type="GO" id="GO:0005829">
    <property type="term" value="C:cytosol"/>
    <property type="evidence" value="ECO:0007669"/>
    <property type="project" value="TreeGrafter"/>
</dbReference>
<dbReference type="GO" id="GO:0008690">
    <property type="term" value="F:3-deoxy-manno-octulosonate cytidylyltransferase activity"/>
    <property type="evidence" value="ECO:0007669"/>
    <property type="project" value="UniProtKB-UniRule"/>
</dbReference>
<dbReference type="GO" id="GO:0033468">
    <property type="term" value="P:CMP-keto-3-deoxy-D-manno-octulosonic acid biosynthetic process"/>
    <property type="evidence" value="ECO:0007669"/>
    <property type="project" value="UniProtKB-UniRule"/>
</dbReference>
<dbReference type="GO" id="GO:0009103">
    <property type="term" value="P:lipopolysaccharide biosynthetic process"/>
    <property type="evidence" value="ECO:0007669"/>
    <property type="project" value="UniProtKB-UniRule"/>
</dbReference>
<dbReference type="CDD" id="cd02517">
    <property type="entry name" value="CMP-KDO-Synthetase"/>
    <property type="match status" value="1"/>
</dbReference>
<dbReference type="FunFam" id="3.90.550.10:FF:000011">
    <property type="entry name" value="3-deoxy-manno-octulosonate cytidylyltransferase"/>
    <property type="match status" value="1"/>
</dbReference>
<dbReference type="Gene3D" id="3.90.550.10">
    <property type="entry name" value="Spore Coat Polysaccharide Biosynthesis Protein SpsA, Chain A"/>
    <property type="match status" value="1"/>
</dbReference>
<dbReference type="HAMAP" id="MF_00057">
    <property type="entry name" value="KdsB"/>
    <property type="match status" value="1"/>
</dbReference>
<dbReference type="InterPro" id="IPR003329">
    <property type="entry name" value="Cytidylyl_trans"/>
</dbReference>
<dbReference type="InterPro" id="IPR004528">
    <property type="entry name" value="KdsB"/>
</dbReference>
<dbReference type="InterPro" id="IPR029044">
    <property type="entry name" value="Nucleotide-diphossugar_trans"/>
</dbReference>
<dbReference type="NCBIfam" id="TIGR00466">
    <property type="entry name" value="kdsB"/>
    <property type="match status" value="1"/>
</dbReference>
<dbReference type="NCBIfam" id="NF003952">
    <property type="entry name" value="PRK05450.1-5"/>
    <property type="match status" value="1"/>
</dbReference>
<dbReference type="PANTHER" id="PTHR42866">
    <property type="entry name" value="3-DEOXY-MANNO-OCTULOSONATE CYTIDYLYLTRANSFERASE"/>
    <property type="match status" value="1"/>
</dbReference>
<dbReference type="PANTHER" id="PTHR42866:SF2">
    <property type="entry name" value="3-DEOXY-MANNO-OCTULOSONATE CYTIDYLYLTRANSFERASE, MITOCHONDRIAL"/>
    <property type="match status" value="1"/>
</dbReference>
<dbReference type="Pfam" id="PF02348">
    <property type="entry name" value="CTP_transf_3"/>
    <property type="match status" value="1"/>
</dbReference>
<dbReference type="SUPFAM" id="SSF53448">
    <property type="entry name" value="Nucleotide-diphospho-sugar transferases"/>
    <property type="match status" value="1"/>
</dbReference>
<proteinExistence type="inferred from homology"/>
<comment type="function">
    <text evidence="1">Activates KDO (a required 8-carbon sugar) for incorporation into bacterial lipopolysaccharide in Gram-negative bacteria.</text>
</comment>
<comment type="catalytic activity">
    <reaction evidence="1">
        <text>3-deoxy-alpha-D-manno-oct-2-ulosonate + CTP = CMP-3-deoxy-beta-D-manno-octulosonate + diphosphate</text>
        <dbReference type="Rhea" id="RHEA:23448"/>
        <dbReference type="ChEBI" id="CHEBI:33019"/>
        <dbReference type="ChEBI" id="CHEBI:37563"/>
        <dbReference type="ChEBI" id="CHEBI:85986"/>
        <dbReference type="ChEBI" id="CHEBI:85987"/>
        <dbReference type="EC" id="2.7.7.38"/>
    </reaction>
</comment>
<comment type="pathway">
    <text evidence="1">Nucleotide-sugar biosynthesis; CMP-3-deoxy-D-manno-octulosonate biosynthesis; CMP-3-deoxy-D-manno-octulosonate from 3-deoxy-D-manno-octulosonate and CTP: step 1/1.</text>
</comment>
<comment type="pathway">
    <text evidence="1">Bacterial outer membrane biogenesis; lipopolysaccharide biosynthesis.</text>
</comment>
<comment type="subcellular location">
    <subcellularLocation>
        <location evidence="1">Cytoplasm</location>
    </subcellularLocation>
</comment>
<comment type="similarity">
    <text evidence="1">Belongs to the KdsB family.</text>
</comment>
<evidence type="ECO:0000255" key="1">
    <source>
        <dbReference type="HAMAP-Rule" id="MF_00057"/>
    </source>
</evidence>
<sequence>MPFVVAIPARFSASRLPGKPLRLLGGRPLIHRVAERALSTGAREVWVATDDVRIAEAVASLDGVHVAMTANTHLSGSDRLAECARIAGWDPEVCVVNLQGDEPFAPAAGIRAVAALLHHSNADMATLATTIDKSEDLFNPNIVKLVCNTHGEALYFSRAPIPWNRDTFATTREPTPLGPWLRHIGLYACNAGFLQRFTTMQPGTLEQIESLEQLRVLEAGHRIAVRITPEHFPPGIDTPEDLAKAEKALEDV</sequence>
<gene>
    <name evidence="1" type="primary">kdsB</name>
    <name type="ordered locus">PD_1337</name>
</gene>
<name>KDSB_XYLFT</name>
<keyword id="KW-0963">Cytoplasm</keyword>
<keyword id="KW-0448">Lipopolysaccharide biosynthesis</keyword>
<keyword id="KW-0548">Nucleotidyltransferase</keyword>
<keyword id="KW-1185">Reference proteome</keyword>
<keyword id="KW-0808">Transferase</keyword>
<feature type="chain" id="PRO_1000091914" description="3-deoxy-manno-octulosonate cytidylyltransferase">
    <location>
        <begin position="1"/>
        <end position="252"/>
    </location>
</feature>